<evidence type="ECO:0000250" key="1"/>
<evidence type="ECO:0000305" key="2"/>
<organism>
    <name type="scientific">Heliothis virescens</name>
    <name type="common">Tobacco budworm moth</name>
    <dbReference type="NCBI Taxonomy" id="7102"/>
    <lineage>
        <taxon>Eukaryota</taxon>
        <taxon>Metazoa</taxon>
        <taxon>Ecdysozoa</taxon>
        <taxon>Arthropoda</taxon>
        <taxon>Hexapoda</taxon>
        <taxon>Insecta</taxon>
        <taxon>Pterygota</taxon>
        <taxon>Neoptera</taxon>
        <taxon>Endopterygota</taxon>
        <taxon>Lepidoptera</taxon>
        <taxon>Glossata</taxon>
        <taxon>Ditrysia</taxon>
        <taxon>Noctuoidea</taxon>
        <taxon>Noctuidae</taxon>
        <taxon>Heliothinae</taxon>
        <taxon>Heliothis</taxon>
    </lineage>
</organism>
<accession>P26317</accession>
<proteinExistence type="evidence at protein level"/>
<sequence>AKDVRFGADVRALMLQGVDVLADA</sequence>
<protein>
    <recommendedName>
        <fullName>60 kDa chaperonin, mitochondrial</fullName>
    </recommendedName>
    <alternativeName>
        <fullName>P60</fullName>
    </alternativeName>
</protein>
<feature type="chain" id="PRO_0000063637" description="60 kDa chaperonin, mitochondrial">
    <location>
        <begin position="1"/>
        <end position="24" status="greater than"/>
    </location>
</feature>
<feature type="non-terminal residue">
    <location>
        <position position="24"/>
    </location>
</feature>
<comment type="function">
    <text evidence="1">Implicated in mitochondrial protein import and macromolecular assembly. May facilitate the correct folding of imported proteins. May also prevent misfolding and promote the refolding and proper assembly of unfolded polypeptides generated under stress conditions in the mitochondrial matrix (By similarity).</text>
</comment>
<comment type="subunit">
    <text>Forms a single seven-member ring complex, in tight association with the p63 protein.</text>
</comment>
<comment type="subcellular location">
    <subcellularLocation>
        <location>Mitochondrion</location>
    </subcellularLocation>
</comment>
<comment type="tissue specificity">
    <text>Testis.</text>
</comment>
<comment type="developmental stage">
    <text>From the second half of the larval final-instar, through the first two days of pupal development.</text>
</comment>
<comment type="miscellaneous">
    <text>Shows ATPase activity.</text>
</comment>
<comment type="similarity">
    <text evidence="2">Belongs to the chaperonin (HSP60) family.</text>
</comment>
<dbReference type="GO" id="GO:0005739">
    <property type="term" value="C:mitochondrion"/>
    <property type="evidence" value="ECO:0007669"/>
    <property type="project" value="UniProtKB-SubCell"/>
</dbReference>
<dbReference type="GO" id="GO:0005524">
    <property type="term" value="F:ATP binding"/>
    <property type="evidence" value="ECO:0007669"/>
    <property type="project" value="UniProtKB-KW"/>
</dbReference>
<keyword id="KW-0067">ATP-binding</keyword>
<keyword id="KW-0143">Chaperone</keyword>
<keyword id="KW-0903">Direct protein sequencing</keyword>
<keyword id="KW-0496">Mitochondrion</keyword>
<keyword id="KW-0547">Nucleotide-binding</keyword>
<name>CH60_HELVI</name>
<reference key="1">
    <citation type="journal article" date="1990" name="J. Mol. Biol.">
        <title>Identification and characterization of a testis-specific isoform of a chaperonin in a moth, Heliothis virescens.</title>
        <authorList>
            <person name="Miller S.G."/>
            <person name="Leclerc R.F."/>
            <person name="Erdos G.W."/>
        </authorList>
    </citation>
    <scope>PROTEIN SEQUENCE</scope>
    <source>
        <tissue>Testis</tissue>
    </source>
</reference>